<reference key="1">
    <citation type="journal article" date="1996" name="Science">
        <title>Complete genome sequence of the methanogenic archaeon, Methanococcus jannaschii.</title>
        <authorList>
            <person name="Bult C.J."/>
            <person name="White O."/>
            <person name="Olsen G.J."/>
            <person name="Zhou L."/>
            <person name="Fleischmann R.D."/>
            <person name="Sutton G.G."/>
            <person name="Blake J.A."/>
            <person name="FitzGerald L.M."/>
            <person name="Clayton R.A."/>
            <person name="Gocayne J.D."/>
            <person name="Kerlavage A.R."/>
            <person name="Dougherty B.A."/>
            <person name="Tomb J.-F."/>
            <person name="Adams M.D."/>
            <person name="Reich C.I."/>
            <person name="Overbeek R."/>
            <person name="Kirkness E.F."/>
            <person name="Weinstock K.G."/>
            <person name="Merrick J.M."/>
            <person name="Glodek A."/>
            <person name="Scott J.L."/>
            <person name="Geoghagen N.S.M."/>
            <person name="Weidman J.F."/>
            <person name="Fuhrmann J.L."/>
            <person name="Nguyen D."/>
            <person name="Utterback T.R."/>
            <person name="Kelley J.M."/>
            <person name="Peterson J.D."/>
            <person name="Sadow P.W."/>
            <person name="Hanna M.C."/>
            <person name="Cotton M.D."/>
            <person name="Roberts K.M."/>
            <person name="Hurst M.A."/>
            <person name="Kaine B.P."/>
            <person name="Borodovsky M."/>
            <person name="Klenk H.-P."/>
            <person name="Fraser C.M."/>
            <person name="Smith H.O."/>
            <person name="Woese C.R."/>
            <person name="Venter J.C."/>
        </authorList>
    </citation>
    <scope>NUCLEOTIDE SEQUENCE [LARGE SCALE GENOMIC DNA]</scope>
    <source>
        <strain>ATCC 43067 / DSM 2661 / JAL-1 / JCM 10045 / NBRC 100440</strain>
    </source>
</reference>
<organism>
    <name type="scientific">Methanocaldococcus jannaschii (strain ATCC 43067 / DSM 2661 / JAL-1 / JCM 10045 / NBRC 100440)</name>
    <name type="common">Methanococcus jannaschii</name>
    <dbReference type="NCBI Taxonomy" id="243232"/>
    <lineage>
        <taxon>Archaea</taxon>
        <taxon>Methanobacteriati</taxon>
        <taxon>Methanobacteriota</taxon>
        <taxon>Methanomada group</taxon>
        <taxon>Methanococci</taxon>
        <taxon>Methanococcales</taxon>
        <taxon>Methanocaldococcaceae</taxon>
        <taxon>Methanocaldococcus</taxon>
    </lineage>
</organism>
<feature type="chain" id="PRO_0000107036" description="Uncharacterized protein MJ0786">
    <location>
        <begin position="1"/>
        <end position="186"/>
    </location>
</feature>
<gene>
    <name type="ordered locus">MJ0786</name>
</gene>
<name>Y786_METJA</name>
<accession>Q58196</accession>
<protein>
    <recommendedName>
        <fullName>Uncharacterized protein MJ0786</fullName>
    </recommendedName>
</protein>
<proteinExistence type="predicted"/>
<dbReference type="EMBL" id="L77117">
    <property type="protein sequence ID" value="AAB98786.1"/>
    <property type="molecule type" value="Genomic_DNA"/>
</dbReference>
<dbReference type="PIR" id="B64398">
    <property type="entry name" value="B64398"/>
</dbReference>
<dbReference type="SMR" id="Q58196"/>
<dbReference type="STRING" id="243232.MJ_0786"/>
<dbReference type="PaxDb" id="243232-MJ_0786"/>
<dbReference type="EnsemblBacteria" id="AAB98786">
    <property type="protein sequence ID" value="AAB98786"/>
    <property type="gene ID" value="MJ_0786"/>
</dbReference>
<dbReference type="KEGG" id="mja:MJ_0786"/>
<dbReference type="eggNOG" id="arCOG02614">
    <property type="taxonomic scope" value="Archaea"/>
</dbReference>
<dbReference type="HOGENOM" id="CLU_1405969_0_0_2"/>
<dbReference type="InParanoid" id="Q58196"/>
<dbReference type="PhylomeDB" id="Q58196"/>
<dbReference type="Proteomes" id="UP000000805">
    <property type="component" value="Chromosome"/>
</dbReference>
<keyword id="KW-1185">Reference proteome</keyword>
<sequence>MIRGTMKIGITKMYKEIADLIGLEEYEIVNPYNTKVDCDFLIISKGYKERVKKLNPESEIFEVKSATFMDLIKSLEELKKLGIGKEGKIDKSIEFLKNKEKEIKKLVKDLNVKVNPKTEFIRKVVEDLGLEISDNGILIIPDYLFDGKNIENIIILKTHNYDLGLVERIEDRYLQIIQSIQKYLNK</sequence>